<gene>
    <name evidence="4" type="primary">tofu-6</name>
    <name evidence="4" type="synonym">mel-47</name>
    <name evidence="4" type="ORF">CBG02394</name>
</gene>
<protein>
    <recommendedName>
        <fullName evidence="3">Embryonic developmental protein tofu-6</fullName>
    </recommendedName>
    <alternativeName>
        <fullName evidence="4">21U-RNA biogenesis fouled up protein 6</fullName>
    </alternativeName>
    <alternativeName>
        <fullName evidence="3">Maternal effect lethal protein 47</fullName>
    </alternativeName>
</protein>
<reference key="1">
    <citation type="journal article" date="2003" name="PLoS Biol.">
        <title>The genome sequence of Caenorhabditis briggsae: a platform for comparative genomics.</title>
        <authorList>
            <person name="Stein L.D."/>
            <person name="Bao Z."/>
            <person name="Blasiar D."/>
            <person name="Blumenthal T."/>
            <person name="Brent M.R."/>
            <person name="Chen N."/>
            <person name="Chinwalla A."/>
            <person name="Clarke L."/>
            <person name="Clee C."/>
            <person name="Coghlan A."/>
            <person name="Coulson A."/>
            <person name="D'Eustachio P."/>
            <person name="Fitch D.H.A."/>
            <person name="Fulton L.A."/>
            <person name="Fulton R.E."/>
            <person name="Griffiths-Jones S."/>
            <person name="Harris T.W."/>
            <person name="Hillier L.W."/>
            <person name="Kamath R."/>
            <person name="Kuwabara P.E."/>
            <person name="Mardis E.R."/>
            <person name="Marra M.A."/>
            <person name="Miner T.L."/>
            <person name="Minx P."/>
            <person name="Mullikin J.C."/>
            <person name="Plumb R.W."/>
            <person name="Rogers J."/>
            <person name="Schein J.E."/>
            <person name="Sohrmann M."/>
            <person name="Spieth J."/>
            <person name="Stajich J.E."/>
            <person name="Wei C."/>
            <person name="Willey D."/>
            <person name="Wilson R.K."/>
            <person name="Durbin R.M."/>
            <person name="Waterston R.H."/>
        </authorList>
    </citation>
    <scope>NUCLEOTIDE SEQUENCE [LARGE SCALE GENOMIC DNA]</scope>
    <source>
        <strain>AF16</strain>
    </source>
</reference>
<feature type="chain" id="PRO_0000298662" description="Embryonic developmental protein tofu-6">
    <location>
        <begin position="1"/>
        <end position="365"/>
    </location>
</feature>
<feature type="domain" description="RRM" evidence="2">
    <location>
        <begin position="13"/>
        <end position="90"/>
    </location>
</feature>
<name>TOFU6_CAEBR</name>
<sequence length="365" mass="40797">MASSSTAFYLKDAGFHIRNVPKEWNDWNLFHIFQVFGRVGYCRVAGQSNDMQLGFVNMLSAADAEEVRKNLHDGNLIGDNYSLKVSDHKNIGGALLPMASISVQKLLSSPPAKSGPVHLSSSWLPLNKDIEVEVVDYLPSSSAAKDVFALTILRINDAQSNEKYNAMHEKMNSYAQLVAFDSELQIGYDGVFRESPRSIKRVRRISATKLYLVDFGKIINYEKSKCFQIPKVFQTIPTRVSFCGLDGLTWSEQAIPSFDNIREVVQKWGAMENATLHAVTCGFAGAINMINLFCGNSVLAERLQRKGICEYLPRHQQPRFAYSRDSLLKHTNAGVTAHISNDADVVKDLLKKIDGVKSMLRELDL</sequence>
<dbReference type="EMBL" id="HE601438">
    <property type="protein sequence ID" value="CAP24115.3"/>
    <property type="molecule type" value="Genomic_DNA"/>
</dbReference>
<dbReference type="SMR" id="Q621Q3"/>
<dbReference type="FunCoup" id="Q621Q3">
    <property type="interactions" value="409"/>
</dbReference>
<dbReference type="STRING" id="6238.Q621Q3"/>
<dbReference type="EnsemblMetazoa" id="CBG02394.1">
    <property type="protein sequence ID" value="CBG02394.1"/>
    <property type="gene ID" value="WBGene00025454"/>
</dbReference>
<dbReference type="KEGG" id="cbr:CBG_02394"/>
<dbReference type="CTD" id="8572227"/>
<dbReference type="WormBase" id="CBG02394">
    <property type="protein sequence ID" value="CBP14399"/>
    <property type="gene ID" value="WBGene00025454"/>
    <property type="gene designation" value="Cbr-tofu-6"/>
</dbReference>
<dbReference type="eggNOG" id="ENOG502SX3Q">
    <property type="taxonomic scope" value="Eukaryota"/>
</dbReference>
<dbReference type="HOGENOM" id="CLU_754855_0_0_1"/>
<dbReference type="InParanoid" id="Q621Q3"/>
<dbReference type="OMA" id="NDWNLFH"/>
<dbReference type="OrthoDB" id="5818176at2759"/>
<dbReference type="Proteomes" id="UP000008549">
    <property type="component" value="Unassembled WGS sequence"/>
</dbReference>
<dbReference type="GO" id="GO:0005737">
    <property type="term" value="C:cytoplasm"/>
    <property type="evidence" value="ECO:0000318"/>
    <property type="project" value="GO_Central"/>
</dbReference>
<dbReference type="GO" id="GO:0005634">
    <property type="term" value="C:nucleus"/>
    <property type="evidence" value="ECO:0000318"/>
    <property type="project" value="GO_Central"/>
</dbReference>
<dbReference type="GO" id="GO:0048471">
    <property type="term" value="C:perinuclear region of cytoplasm"/>
    <property type="evidence" value="ECO:0007669"/>
    <property type="project" value="EnsemblMetazoa"/>
</dbReference>
<dbReference type="GO" id="GO:1990904">
    <property type="term" value="C:ribonucleoprotein complex"/>
    <property type="evidence" value="ECO:0000318"/>
    <property type="project" value="GO_Central"/>
</dbReference>
<dbReference type="GO" id="GO:0034518">
    <property type="term" value="C:RNA cap binding complex"/>
    <property type="evidence" value="ECO:0007669"/>
    <property type="project" value="EnsemblMetazoa"/>
</dbReference>
<dbReference type="GO" id="GO:0003729">
    <property type="term" value="F:mRNA binding"/>
    <property type="evidence" value="ECO:0000318"/>
    <property type="project" value="GO_Central"/>
</dbReference>
<dbReference type="GO" id="GO:0051301">
    <property type="term" value="P:cell division"/>
    <property type="evidence" value="ECO:0000250"/>
    <property type="project" value="UniProtKB"/>
</dbReference>
<dbReference type="GO" id="GO:0006260">
    <property type="term" value="P:DNA replication"/>
    <property type="evidence" value="ECO:0000250"/>
    <property type="project" value="UniProtKB"/>
</dbReference>
<dbReference type="GO" id="GO:0009792">
    <property type="term" value="P:embryo development ending in birth or egg hatching"/>
    <property type="evidence" value="ECO:0007669"/>
    <property type="project" value="EnsemblMetazoa"/>
</dbReference>
<dbReference type="GO" id="GO:0040016">
    <property type="term" value="P:embryonic cleavage"/>
    <property type="evidence" value="ECO:0007669"/>
    <property type="project" value="EnsemblMetazoa"/>
</dbReference>
<dbReference type="GO" id="GO:0051306">
    <property type="term" value="P:mitotic sister chromatid separation"/>
    <property type="evidence" value="ECO:0007669"/>
    <property type="project" value="EnsemblMetazoa"/>
</dbReference>
<dbReference type="GO" id="GO:0034587">
    <property type="term" value="P:piRNA processing"/>
    <property type="evidence" value="ECO:0007669"/>
    <property type="project" value="EnsemblMetazoa"/>
</dbReference>
<dbReference type="GO" id="GO:0051781">
    <property type="term" value="P:positive regulation of cell division"/>
    <property type="evidence" value="ECO:0007669"/>
    <property type="project" value="EnsemblMetazoa"/>
</dbReference>
<dbReference type="GO" id="GO:0051984">
    <property type="term" value="P:positive regulation of chromosome segregation"/>
    <property type="evidence" value="ECO:0007669"/>
    <property type="project" value="EnsemblMetazoa"/>
</dbReference>
<dbReference type="CDD" id="cd00590">
    <property type="entry name" value="RRM_SF"/>
    <property type="match status" value="1"/>
</dbReference>
<dbReference type="FunFam" id="3.30.70.330:FF:001603">
    <property type="match status" value="1"/>
</dbReference>
<dbReference type="Gene3D" id="3.30.70.330">
    <property type="match status" value="1"/>
</dbReference>
<dbReference type="InterPro" id="IPR012677">
    <property type="entry name" value="Nucleotide-bd_a/b_plait_sf"/>
</dbReference>
<dbReference type="InterPro" id="IPR035979">
    <property type="entry name" value="RBD_domain_sf"/>
</dbReference>
<dbReference type="InterPro" id="IPR000504">
    <property type="entry name" value="RRM_dom"/>
</dbReference>
<dbReference type="SMART" id="SM00360">
    <property type="entry name" value="RRM"/>
    <property type="match status" value="1"/>
</dbReference>
<dbReference type="SUPFAM" id="SSF54928">
    <property type="entry name" value="RNA-binding domain, RBD"/>
    <property type="match status" value="1"/>
</dbReference>
<dbReference type="PROSITE" id="PS50102">
    <property type="entry name" value="RRM"/>
    <property type="match status" value="1"/>
</dbReference>
<evidence type="ECO:0000250" key="1">
    <source>
        <dbReference type="UniProtKB" id="Q09293"/>
    </source>
</evidence>
<evidence type="ECO:0000255" key="2">
    <source>
        <dbReference type="PROSITE-ProRule" id="PRU00176"/>
    </source>
</evidence>
<evidence type="ECO:0000305" key="3"/>
<evidence type="ECO:0000312" key="4">
    <source>
        <dbReference type="WormBase" id="CBG02394"/>
    </source>
</evidence>
<keyword id="KW-0131">Cell cycle</keyword>
<keyword id="KW-0132">Cell division</keyword>
<keyword id="KW-0217">Developmental protein</keyword>
<keyword id="KW-1185">Reference proteome</keyword>
<keyword id="KW-0694">RNA-binding</keyword>
<comment type="function">
    <text evidence="1">Required maternally for early embryonic cell divisions. May have a role in DNA replication.</text>
</comment>
<accession>Q621Q3</accession>
<accession>A8WUF3</accession>
<proteinExistence type="inferred from homology"/>
<organism>
    <name type="scientific">Caenorhabditis briggsae</name>
    <dbReference type="NCBI Taxonomy" id="6238"/>
    <lineage>
        <taxon>Eukaryota</taxon>
        <taxon>Metazoa</taxon>
        <taxon>Ecdysozoa</taxon>
        <taxon>Nematoda</taxon>
        <taxon>Chromadorea</taxon>
        <taxon>Rhabditida</taxon>
        <taxon>Rhabditina</taxon>
        <taxon>Rhabditomorpha</taxon>
        <taxon>Rhabditoidea</taxon>
        <taxon>Rhabditidae</taxon>
        <taxon>Peloderinae</taxon>
        <taxon>Caenorhabditis</taxon>
    </lineage>
</organism>